<gene>
    <name evidence="1" type="primary">panD</name>
    <name type="ordered locus">ECH74115_0139</name>
</gene>
<sequence>MIRTMLQGKLHRVKVTHADLHYEGSCAIDQDFLDAAGILENEAIDIWNVTNGKRFSTYAIAAERGSRIISVNGAAAHCASVGDIVIIASFVTMPDEEARTWRPNVAYFEGDNEMKRTAKAIPVQVA</sequence>
<feature type="chain" id="PRO_1000191995" description="Aspartate 1-decarboxylase beta chain" evidence="1">
    <location>
        <begin position="1"/>
        <end position="24"/>
    </location>
</feature>
<feature type="chain" id="PRO_1000191996" description="Aspartate 1-decarboxylase alpha chain" evidence="1">
    <location>
        <begin position="25"/>
        <end position="126"/>
    </location>
</feature>
<feature type="active site" description="Schiff-base intermediate with substrate; via pyruvic acid" evidence="1">
    <location>
        <position position="25"/>
    </location>
</feature>
<feature type="active site" description="Proton donor" evidence="1">
    <location>
        <position position="58"/>
    </location>
</feature>
<feature type="binding site" evidence="1">
    <location>
        <position position="57"/>
    </location>
    <ligand>
        <name>substrate</name>
    </ligand>
</feature>
<feature type="binding site" evidence="1">
    <location>
        <begin position="73"/>
        <end position="75"/>
    </location>
    <ligand>
        <name>substrate</name>
    </ligand>
</feature>
<feature type="modified residue" description="Pyruvic acid (Ser)" evidence="1">
    <location>
        <position position="25"/>
    </location>
</feature>
<evidence type="ECO:0000255" key="1">
    <source>
        <dbReference type="HAMAP-Rule" id="MF_00446"/>
    </source>
</evidence>
<name>PAND_ECO5E</name>
<organism>
    <name type="scientific">Escherichia coli O157:H7 (strain EC4115 / EHEC)</name>
    <dbReference type="NCBI Taxonomy" id="444450"/>
    <lineage>
        <taxon>Bacteria</taxon>
        <taxon>Pseudomonadati</taxon>
        <taxon>Pseudomonadota</taxon>
        <taxon>Gammaproteobacteria</taxon>
        <taxon>Enterobacterales</taxon>
        <taxon>Enterobacteriaceae</taxon>
        <taxon>Escherichia</taxon>
    </lineage>
</organism>
<dbReference type="EC" id="4.1.1.11" evidence="1"/>
<dbReference type="EMBL" id="CP001164">
    <property type="protein sequence ID" value="ACI35758.1"/>
    <property type="molecule type" value="Genomic_DNA"/>
</dbReference>
<dbReference type="RefSeq" id="WP_000621515.1">
    <property type="nucleotide sequence ID" value="NC_011353.1"/>
</dbReference>
<dbReference type="SMR" id="B5YZG7"/>
<dbReference type="GeneID" id="93777305"/>
<dbReference type="KEGG" id="ecf:ECH74115_0139"/>
<dbReference type="HOGENOM" id="CLU_115305_2_1_6"/>
<dbReference type="UniPathway" id="UPA00028">
    <property type="reaction ID" value="UER00002"/>
</dbReference>
<dbReference type="GO" id="GO:0005829">
    <property type="term" value="C:cytosol"/>
    <property type="evidence" value="ECO:0007669"/>
    <property type="project" value="TreeGrafter"/>
</dbReference>
<dbReference type="GO" id="GO:0004068">
    <property type="term" value="F:aspartate 1-decarboxylase activity"/>
    <property type="evidence" value="ECO:0007669"/>
    <property type="project" value="UniProtKB-UniRule"/>
</dbReference>
<dbReference type="GO" id="GO:0006523">
    <property type="term" value="P:alanine biosynthetic process"/>
    <property type="evidence" value="ECO:0007669"/>
    <property type="project" value="InterPro"/>
</dbReference>
<dbReference type="GO" id="GO:0015940">
    <property type="term" value="P:pantothenate biosynthetic process"/>
    <property type="evidence" value="ECO:0007669"/>
    <property type="project" value="UniProtKB-UniRule"/>
</dbReference>
<dbReference type="CDD" id="cd06919">
    <property type="entry name" value="Asp_decarbox"/>
    <property type="match status" value="1"/>
</dbReference>
<dbReference type="FunFam" id="2.40.40.20:FF:000004">
    <property type="entry name" value="Aspartate 1-decarboxylase"/>
    <property type="match status" value="1"/>
</dbReference>
<dbReference type="Gene3D" id="2.40.40.20">
    <property type="match status" value="1"/>
</dbReference>
<dbReference type="HAMAP" id="MF_00446">
    <property type="entry name" value="PanD"/>
    <property type="match status" value="1"/>
</dbReference>
<dbReference type="InterPro" id="IPR009010">
    <property type="entry name" value="Asp_de-COase-like_dom_sf"/>
</dbReference>
<dbReference type="InterPro" id="IPR003190">
    <property type="entry name" value="Asp_decarbox"/>
</dbReference>
<dbReference type="NCBIfam" id="TIGR00223">
    <property type="entry name" value="panD"/>
    <property type="match status" value="1"/>
</dbReference>
<dbReference type="PANTHER" id="PTHR21012">
    <property type="entry name" value="ASPARTATE 1-DECARBOXYLASE"/>
    <property type="match status" value="1"/>
</dbReference>
<dbReference type="PANTHER" id="PTHR21012:SF0">
    <property type="entry name" value="ASPARTATE 1-DECARBOXYLASE"/>
    <property type="match status" value="1"/>
</dbReference>
<dbReference type="Pfam" id="PF02261">
    <property type="entry name" value="Asp_decarbox"/>
    <property type="match status" value="1"/>
</dbReference>
<dbReference type="PIRSF" id="PIRSF006246">
    <property type="entry name" value="Asp_decarbox"/>
    <property type="match status" value="1"/>
</dbReference>
<dbReference type="SUPFAM" id="SSF50692">
    <property type="entry name" value="ADC-like"/>
    <property type="match status" value="1"/>
</dbReference>
<comment type="function">
    <text evidence="1">Catalyzes the pyruvoyl-dependent decarboxylation of aspartate to produce beta-alanine.</text>
</comment>
<comment type="catalytic activity">
    <reaction evidence="1">
        <text>L-aspartate + H(+) = beta-alanine + CO2</text>
        <dbReference type="Rhea" id="RHEA:19497"/>
        <dbReference type="ChEBI" id="CHEBI:15378"/>
        <dbReference type="ChEBI" id="CHEBI:16526"/>
        <dbReference type="ChEBI" id="CHEBI:29991"/>
        <dbReference type="ChEBI" id="CHEBI:57966"/>
        <dbReference type="EC" id="4.1.1.11"/>
    </reaction>
</comment>
<comment type="cofactor">
    <cofactor evidence="1">
        <name>pyruvate</name>
        <dbReference type="ChEBI" id="CHEBI:15361"/>
    </cofactor>
    <text evidence="1">Binds 1 pyruvoyl group covalently per subunit.</text>
</comment>
<comment type="pathway">
    <text evidence="1">Cofactor biosynthesis; (R)-pantothenate biosynthesis; beta-alanine from L-aspartate: step 1/1.</text>
</comment>
<comment type="subunit">
    <text evidence="1">Heterooctamer of four alpha and four beta subunits.</text>
</comment>
<comment type="subcellular location">
    <subcellularLocation>
        <location evidence="1">Cytoplasm</location>
    </subcellularLocation>
</comment>
<comment type="PTM">
    <text evidence="1">Is synthesized initially as an inactive proenzyme, which is activated by self-cleavage at a specific serine bond to produce a beta-subunit with a hydroxyl group at its C-terminus and an alpha-subunit with a pyruvoyl group at its N-terminus.</text>
</comment>
<comment type="similarity">
    <text evidence="1">Belongs to the PanD family.</text>
</comment>
<protein>
    <recommendedName>
        <fullName evidence="1">Aspartate 1-decarboxylase</fullName>
        <ecNumber evidence="1">4.1.1.11</ecNumber>
    </recommendedName>
    <alternativeName>
        <fullName evidence="1">Aspartate alpha-decarboxylase</fullName>
    </alternativeName>
    <component>
        <recommendedName>
            <fullName evidence="1">Aspartate 1-decarboxylase beta chain</fullName>
        </recommendedName>
    </component>
    <component>
        <recommendedName>
            <fullName evidence="1">Aspartate 1-decarboxylase alpha chain</fullName>
        </recommendedName>
    </component>
</protein>
<keyword id="KW-0068">Autocatalytic cleavage</keyword>
<keyword id="KW-0963">Cytoplasm</keyword>
<keyword id="KW-0210">Decarboxylase</keyword>
<keyword id="KW-0456">Lyase</keyword>
<keyword id="KW-0566">Pantothenate biosynthesis</keyword>
<keyword id="KW-0670">Pyruvate</keyword>
<keyword id="KW-0704">Schiff base</keyword>
<keyword id="KW-0865">Zymogen</keyword>
<reference key="1">
    <citation type="journal article" date="2011" name="Proc. Natl. Acad. Sci. U.S.A.">
        <title>Genomic anatomy of Escherichia coli O157:H7 outbreaks.</title>
        <authorList>
            <person name="Eppinger M."/>
            <person name="Mammel M.K."/>
            <person name="Leclerc J.E."/>
            <person name="Ravel J."/>
            <person name="Cebula T.A."/>
        </authorList>
    </citation>
    <scope>NUCLEOTIDE SEQUENCE [LARGE SCALE GENOMIC DNA]</scope>
    <source>
        <strain>EC4115 / EHEC</strain>
    </source>
</reference>
<accession>B5YZG7</accession>
<proteinExistence type="inferred from homology"/>